<sequence>MSTFNAETADNLEDIEKQFAVVAVEQAETYWKLLTSVPGSKLRLTKFDDEIYENFMERFPEYKDVERVKKFTEEELKTKEAKERWRKFFTIFEKKIEDYNFGTLLRTDASAEYGQFTTCFVVRLQFYAFEIARNKHGLNDWIVGQK</sequence>
<gene>
    <name type="ordered locus">YPL225W</name>
</gene>
<comment type="subcellular location">
    <subcellularLocation>
        <location evidence="1">Cytoplasm</location>
    </subcellularLocation>
</comment>
<comment type="miscellaneous">
    <text evidence="2">Present with 37500 molecules/cell in log phase SD medium.</text>
</comment>
<comment type="similarity">
    <text evidence="3">Belongs to the PBDC1 family.</text>
</comment>
<protein>
    <recommendedName>
        <fullName>Protein PBDC1 homolog</fullName>
    </recommendedName>
</protein>
<proteinExistence type="evidence at protein level"/>
<name>YP225_YEAST</name>
<evidence type="ECO:0000269" key="1">
    <source>
    </source>
</evidence>
<evidence type="ECO:0000269" key="2">
    <source>
    </source>
</evidence>
<evidence type="ECO:0000305" key="3"/>
<evidence type="ECO:0007829" key="4">
    <source>
        <dbReference type="PDB" id="2JYN"/>
    </source>
</evidence>
<dbReference type="EMBL" id="Z73581">
    <property type="protein sequence ID" value="CAA97940.1"/>
    <property type="molecule type" value="Genomic_DNA"/>
</dbReference>
<dbReference type="EMBL" id="AY692562">
    <property type="protein sequence ID" value="AAT92581.1"/>
    <property type="molecule type" value="Genomic_DNA"/>
</dbReference>
<dbReference type="EMBL" id="BK006949">
    <property type="protein sequence ID" value="DAA11211.1"/>
    <property type="molecule type" value="Genomic_DNA"/>
</dbReference>
<dbReference type="PIR" id="S65244">
    <property type="entry name" value="S65244"/>
</dbReference>
<dbReference type="PDB" id="2JYN">
    <property type="method" value="NMR"/>
    <property type="chains" value="A=1-146"/>
</dbReference>
<dbReference type="PDBsum" id="2JYN"/>
<dbReference type="BMRB" id="Q08971"/>
<dbReference type="SMR" id="Q08971"/>
<dbReference type="BioGRID" id="35960">
    <property type="interactions" value="120"/>
</dbReference>
<dbReference type="FunCoup" id="Q08971">
    <property type="interactions" value="783"/>
</dbReference>
<dbReference type="IntAct" id="Q08971">
    <property type="interactions" value="9"/>
</dbReference>
<dbReference type="MINT" id="Q08971"/>
<dbReference type="STRING" id="4932.YPL225W"/>
<dbReference type="iPTMnet" id="Q08971"/>
<dbReference type="PaxDb" id="4932-YPL225W"/>
<dbReference type="PeptideAtlas" id="Q08971"/>
<dbReference type="DNASU" id="855876"/>
<dbReference type="EnsemblFungi" id="YPL225W_mRNA">
    <property type="protein sequence ID" value="YPL225W"/>
    <property type="gene ID" value="YPL225W"/>
</dbReference>
<dbReference type="KEGG" id="sce:YPL225W"/>
<dbReference type="AGR" id="SGD:S000006146"/>
<dbReference type="SGD" id="S000006146">
    <property type="gene designation" value="YPL225W"/>
</dbReference>
<dbReference type="VEuPathDB" id="FungiDB:YPL225W"/>
<dbReference type="eggNOG" id="KOG4093">
    <property type="taxonomic scope" value="Eukaryota"/>
</dbReference>
<dbReference type="GeneTree" id="ENSGT00390000016333"/>
<dbReference type="HOGENOM" id="CLU_103791_1_0_1"/>
<dbReference type="InParanoid" id="Q08971"/>
<dbReference type="OMA" id="IQFYAFE"/>
<dbReference type="OrthoDB" id="10248897at2759"/>
<dbReference type="BioCyc" id="YEAST:G3O-34114-MONOMER"/>
<dbReference type="BioGRID-ORCS" id="855876">
    <property type="hits" value="0 hits in 10 CRISPR screens"/>
</dbReference>
<dbReference type="EvolutionaryTrace" id="Q08971"/>
<dbReference type="PRO" id="PR:Q08971"/>
<dbReference type="Proteomes" id="UP000002311">
    <property type="component" value="Chromosome XVI"/>
</dbReference>
<dbReference type="RNAct" id="Q08971">
    <property type="molecule type" value="protein"/>
</dbReference>
<dbReference type="GO" id="GO:0005737">
    <property type="term" value="C:cytoplasm"/>
    <property type="evidence" value="ECO:0007005"/>
    <property type="project" value="SGD"/>
</dbReference>
<dbReference type="GO" id="GO:0051787">
    <property type="term" value="F:misfolded protein binding"/>
    <property type="evidence" value="ECO:0000314"/>
    <property type="project" value="SGD"/>
</dbReference>
<dbReference type="GO" id="GO:1990593">
    <property type="term" value="F:nascent polypeptide-associated complex binding"/>
    <property type="evidence" value="ECO:0000314"/>
    <property type="project" value="SGD"/>
</dbReference>
<dbReference type="GO" id="GO:0044183">
    <property type="term" value="F:protein folding chaperone"/>
    <property type="evidence" value="ECO:0000314"/>
    <property type="project" value="SGD"/>
</dbReference>
<dbReference type="GO" id="GO:0043022">
    <property type="term" value="F:ribosome binding"/>
    <property type="evidence" value="ECO:0000314"/>
    <property type="project" value="SGD"/>
</dbReference>
<dbReference type="GO" id="GO:0061770">
    <property type="term" value="F:translation elongation factor binding"/>
    <property type="evidence" value="ECO:0000314"/>
    <property type="project" value="SGD"/>
</dbReference>
<dbReference type="GO" id="GO:0051083">
    <property type="term" value="P:'de novo' cotranslational protein folding"/>
    <property type="evidence" value="ECO:0000314"/>
    <property type="project" value="SGD"/>
</dbReference>
<dbReference type="FunFam" id="1.10.3560.10:FF:000001">
    <property type="entry name" value="Protein PBDC1 homolog"/>
    <property type="match status" value="1"/>
</dbReference>
<dbReference type="Gene3D" id="1.10.3560.10">
    <property type="entry name" value="yst0336 like domain"/>
    <property type="match status" value="1"/>
</dbReference>
<dbReference type="InterPro" id="IPR023139">
    <property type="entry name" value="PBDC1-like_dom_sf"/>
</dbReference>
<dbReference type="InterPro" id="IPR008476">
    <property type="entry name" value="PBDC1_metazoa/fungi"/>
</dbReference>
<dbReference type="InterPro" id="IPR021148">
    <property type="entry name" value="Polysacc_synth_dom"/>
</dbReference>
<dbReference type="PANTHER" id="PTHR13410">
    <property type="entry name" value="PROTEIN PBDC1"/>
    <property type="match status" value="1"/>
</dbReference>
<dbReference type="PANTHER" id="PTHR13410:SF9">
    <property type="entry name" value="PROTEIN PBDC1"/>
    <property type="match status" value="1"/>
</dbReference>
<dbReference type="Pfam" id="PF04669">
    <property type="entry name" value="PBDC1"/>
    <property type="match status" value="1"/>
</dbReference>
<feature type="chain" id="PRO_0000242144" description="Protein PBDC1 homolog">
    <location>
        <begin position="1"/>
        <end position="146"/>
    </location>
</feature>
<feature type="strand" evidence="4">
    <location>
        <begin position="4"/>
        <end position="6"/>
    </location>
</feature>
<feature type="helix" evidence="4">
    <location>
        <begin position="12"/>
        <end position="36"/>
    </location>
</feature>
<feature type="helix" evidence="4">
    <location>
        <begin position="48"/>
        <end position="58"/>
    </location>
</feature>
<feature type="turn" evidence="4">
    <location>
        <begin position="60"/>
        <end position="62"/>
    </location>
</feature>
<feature type="helix" evidence="4">
    <location>
        <begin position="65"/>
        <end position="69"/>
    </location>
</feature>
<feature type="turn" evidence="4">
    <location>
        <begin position="74"/>
        <end position="76"/>
    </location>
</feature>
<feature type="helix" evidence="4">
    <location>
        <begin position="79"/>
        <end position="92"/>
    </location>
</feature>
<feature type="turn" evidence="4">
    <location>
        <begin position="93"/>
        <end position="95"/>
    </location>
</feature>
<feature type="strand" evidence="4">
    <location>
        <begin position="103"/>
        <end position="108"/>
    </location>
</feature>
<feature type="strand" evidence="4">
    <location>
        <begin position="118"/>
        <end position="121"/>
    </location>
</feature>
<feature type="helix" evidence="4">
    <location>
        <begin position="123"/>
        <end position="135"/>
    </location>
</feature>
<feature type="turn" evidence="4">
    <location>
        <begin position="136"/>
        <end position="139"/>
    </location>
</feature>
<feature type="helix" evidence="4">
    <location>
        <begin position="140"/>
        <end position="142"/>
    </location>
</feature>
<organism>
    <name type="scientific">Saccharomyces cerevisiae (strain ATCC 204508 / S288c)</name>
    <name type="common">Baker's yeast</name>
    <dbReference type="NCBI Taxonomy" id="559292"/>
    <lineage>
        <taxon>Eukaryota</taxon>
        <taxon>Fungi</taxon>
        <taxon>Dikarya</taxon>
        <taxon>Ascomycota</taxon>
        <taxon>Saccharomycotina</taxon>
        <taxon>Saccharomycetes</taxon>
        <taxon>Saccharomycetales</taxon>
        <taxon>Saccharomycetaceae</taxon>
        <taxon>Saccharomyces</taxon>
    </lineage>
</organism>
<keyword id="KW-0002">3D-structure</keyword>
<keyword id="KW-0963">Cytoplasm</keyword>
<keyword id="KW-1185">Reference proteome</keyword>
<accession>Q08971</accession>
<accession>D6W3E5</accession>
<reference key="1">
    <citation type="journal article" date="1997" name="Nature">
        <title>The nucleotide sequence of Saccharomyces cerevisiae chromosome XVI.</title>
        <authorList>
            <person name="Bussey H."/>
            <person name="Storms R.K."/>
            <person name="Ahmed A."/>
            <person name="Albermann K."/>
            <person name="Allen E."/>
            <person name="Ansorge W."/>
            <person name="Araujo R."/>
            <person name="Aparicio A."/>
            <person name="Barrell B.G."/>
            <person name="Badcock K."/>
            <person name="Benes V."/>
            <person name="Botstein D."/>
            <person name="Bowman S."/>
            <person name="Brueckner M."/>
            <person name="Carpenter J."/>
            <person name="Cherry J.M."/>
            <person name="Chung E."/>
            <person name="Churcher C.M."/>
            <person name="Coster F."/>
            <person name="Davis K."/>
            <person name="Davis R.W."/>
            <person name="Dietrich F.S."/>
            <person name="Delius H."/>
            <person name="DiPaolo T."/>
            <person name="Dubois E."/>
            <person name="Duesterhoeft A."/>
            <person name="Duncan M."/>
            <person name="Floeth M."/>
            <person name="Fortin N."/>
            <person name="Friesen J.D."/>
            <person name="Fritz C."/>
            <person name="Goffeau A."/>
            <person name="Hall J."/>
            <person name="Hebling U."/>
            <person name="Heumann K."/>
            <person name="Hilbert H."/>
            <person name="Hillier L.W."/>
            <person name="Hunicke-Smith S."/>
            <person name="Hyman R.W."/>
            <person name="Johnston M."/>
            <person name="Kalman S."/>
            <person name="Kleine K."/>
            <person name="Komp C."/>
            <person name="Kurdi O."/>
            <person name="Lashkari D."/>
            <person name="Lew H."/>
            <person name="Lin A."/>
            <person name="Lin D."/>
            <person name="Louis E.J."/>
            <person name="Marathe R."/>
            <person name="Messenguy F."/>
            <person name="Mewes H.-W."/>
            <person name="Mirtipati S."/>
            <person name="Moestl D."/>
            <person name="Mueller-Auer S."/>
            <person name="Namath A."/>
            <person name="Nentwich U."/>
            <person name="Oefner P."/>
            <person name="Pearson D."/>
            <person name="Petel F.X."/>
            <person name="Pohl T.M."/>
            <person name="Purnelle B."/>
            <person name="Rajandream M.A."/>
            <person name="Rechmann S."/>
            <person name="Rieger M."/>
            <person name="Riles L."/>
            <person name="Roberts D."/>
            <person name="Schaefer M."/>
            <person name="Scharfe M."/>
            <person name="Scherens B."/>
            <person name="Schramm S."/>
            <person name="Schroeder M."/>
            <person name="Sdicu A.-M."/>
            <person name="Tettelin H."/>
            <person name="Urrestarazu L.A."/>
            <person name="Ushinsky S."/>
            <person name="Vierendeels F."/>
            <person name="Vissers S."/>
            <person name="Voss H."/>
            <person name="Walsh S.V."/>
            <person name="Wambutt R."/>
            <person name="Wang Y."/>
            <person name="Wedler E."/>
            <person name="Wedler H."/>
            <person name="Winnett E."/>
            <person name="Zhong W.-W."/>
            <person name="Zollner A."/>
            <person name="Vo D.H."/>
            <person name="Hani J."/>
        </authorList>
    </citation>
    <scope>NUCLEOTIDE SEQUENCE [LARGE SCALE GENOMIC DNA]</scope>
    <source>
        <strain>ATCC 204508 / S288c</strain>
    </source>
</reference>
<reference key="2">
    <citation type="journal article" date="2014" name="G3 (Bethesda)">
        <title>The reference genome sequence of Saccharomyces cerevisiae: Then and now.</title>
        <authorList>
            <person name="Engel S.R."/>
            <person name="Dietrich F.S."/>
            <person name="Fisk D.G."/>
            <person name="Binkley G."/>
            <person name="Balakrishnan R."/>
            <person name="Costanzo M.C."/>
            <person name="Dwight S.S."/>
            <person name="Hitz B.C."/>
            <person name="Karra K."/>
            <person name="Nash R.S."/>
            <person name="Weng S."/>
            <person name="Wong E.D."/>
            <person name="Lloyd P."/>
            <person name="Skrzypek M.S."/>
            <person name="Miyasato S.R."/>
            <person name="Simison M."/>
            <person name="Cherry J.M."/>
        </authorList>
    </citation>
    <scope>GENOME REANNOTATION</scope>
    <source>
        <strain>ATCC 204508 / S288c</strain>
    </source>
</reference>
<reference key="3">
    <citation type="journal article" date="2007" name="Genome Res.">
        <title>Approaching a complete repository of sequence-verified protein-encoding clones for Saccharomyces cerevisiae.</title>
        <authorList>
            <person name="Hu Y."/>
            <person name="Rolfs A."/>
            <person name="Bhullar B."/>
            <person name="Murthy T.V.S."/>
            <person name="Zhu C."/>
            <person name="Berger M.F."/>
            <person name="Camargo A.A."/>
            <person name="Kelley F."/>
            <person name="McCarron S."/>
            <person name="Jepson D."/>
            <person name="Richardson A."/>
            <person name="Raphael J."/>
            <person name="Moreira D."/>
            <person name="Taycher E."/>
            <person name="Zuo D."/>
            <person name="Mohr S."/>
            <person name="Kane M.F."/>
            <person name="Williamson J."/>
            <person name="Simpson A.J.G."/>
            <person name="Bulyk M.L."/>
            <person name="Harlow E."/>
            <person name="Marsischky G."/>
            <person name="Kolodner R.D."/>
            <person name="LaBaer J."/>
        </authorList>
    </citation>
    <scope>NUCLEOTIDE SEQUENCE [GENOMIC DNA]</scope>
    <source>
        <strain>ATCC 204508 / S288c</strain>
    </source>
</reference>
<reference key="4">
    <citation type="journal article" date="2003" name="Nature">
        <title>Global analysis of protein localization in budding yeast.</title>
        <authorList>
            <person name="Huh W.-K."/>
            <person name="Falvo J.V."/>
            <person name="Gerke L.C."/>
            <person name="Carroll A.S."/>
            <person name="Howson R.W."/>
            <person name="Weissman J.S."/>
            <person name="O'Shea E.K."/>
        </authorList>
    </citation>
    <scope>SUBCELLULAR LOCATION [LARGE SCALE ANALYSIS]</scope>
</reference>
<reference key="5">
    <citation type="journal article" date="2003" name="Nature">
        <title>Global analysis of protein expression in yeast.</title>
        <authorList>
            <person name="Ghaemmaghami S."/>
            <person name="Huh W.-K."/>
            <person name="Bower K."/>
            <person name="Howson R.W."/>
            <person name="Belle A."/>
            <person name="Dephoure N."/>
            <person name="O'Shea E.K."/>
            <person name="Weissman J.S."/>
        </authorList>
    </citation>
    <scope>LEVEL OF PROTEIN EXPRESSION [LARGE SCALE ANALYSIS]</scope>
</reference>